<feature type="chain" id="PRO_1000061244" description="Protein Smg">
    <location>
        <begin position="1"/>
        <end position="157"/>
    </location>
</feature>
<sequence length="157" mass="18472">MFDVLIYLFETYMHNEPEMLVDQDKITDDLADAGFYREDINNALNWLEVLADLQEGQKAPYLYTADPQALRIYTVEECRRLGAACRGFILFLEQIQVLQFDTREMVIDRIMALDSPEIDLEDLKWVVLMVLFNIPGYENAYKQMEELLFEVNDGYLH</sequence>
<evidence type="ECO:0000255" key="1">
    <source>
        <dbReference type="HAMAP-Rule" id="MF_00598"/>
    </source>
</evidence>
<protein>
    <recommendedName>
        <fullName evidence="1">Protein Smg</fullName>
    </recommendedName>
</protein>
<comment type="similarity">
    <text evidence="1">Belongs to the Smg family.</text>
</comment>
<name>SMG_YERP3</name>
<proteinExistence type="inferred from homology"/>
<organism>
    <name type="scientific">Yersinia pseudotuberculosis serotype O:1b (strain IP 31758)</name>
    <dbReference type="NCBI Taxonomy" id="349747"/>
    <lineage>
        <taxon>Bacteria</taxon>
        <taxon>Pseudomonadati</taxon>
        <taxon>Pseudomonadota</taxon>
        <taxon>Gammaproteobacteria</taxon>
        <taxon>Enterobacterales</taxon>
        <taxon>Yersiniaceae</taxon>
        <taxon>Yersinia</taxon>
    </lineage>
</organism>
<gene>
    <name evidence="1" type="primary">smg</name>
    <name type="ordered locus">YpsIP31758_3880</name>
</gene>
<accession>A7FNK0</accession>
<dbReference type="EMBL" id="CP000720">
    <property type="protein sequence ID" value="ABS47874.1"/>
    <property type="molecule type" value="Genomic_DNA"/>
</dbReference>
<dbReference type="RefSeq" id="WP_002209023.1">
    <property type="nucleotide sequence ID" value="NC_009708.1"/>
</dbReference>
<dbReference type="SMR" id="A7FNK0"/>
<dbReference type="KEGG" id="ypi:YpsIP31758_3880"/>
<dbReference type="HOGENOM" id="CLU_133242_0_0_6"/>
<dbReference type="Proteomes" id="UP000002412">
    <property type="component" value="Chromosome"/>
</dbReference>
<dbReference type="HAMAP" id="MF_00598">
    <property type="entry name" value="Smg"/>
    <property type="match status" value="1"/>
</dbReference>
<dbReference type="InterPro" id="IPR007456">
    <property type="entry name" value="Smg"/>
</dbReference>
<dbReference type="NCBIfam" id="NF002897">
    <property type="entry name" value="PRK03430.1"/>
    <property type="match status" value="1"/>
</dbReference>
<dbReference type="PANTHER" id="PTHR38692">
    <property type="entry name" value="PROTEIN SMG"/>
    <property type="match status" value="1"/>
</dbReference>
<dbReference type="PANTHER" id="PTHR38692:SF1">
    <property type="entry name" value="PROTEIN SMG"/>
    <property type="match status" value="1"/>
</dbReference>
<dbReference type="Pfam" id="PF04361">
    <property type="entry name" value="DUF494"/>
    <property type="match status" value="1"/>
</dbReference>
<reference key="1">
    <citation type="journal article" date="2007" name="PLoS Genet.">
        <title>The complete genome sequence of Yersinia pseudotuberculosis IP31758, the causative agent of Far East scarlet-like fever.</title>
        <authorList>
            <person name="Eppinger M."/>
            <person name="Rosovitz M.J."/>
            <person name="Fricke W.F."/>
            <person name="Rasko D.A."/>
            <person name="Kokorina G."/>
            <person name="Fayolle C."/>
            <person name="Lindler L.E."/>
            <person name="Carniel E."/>
            <person name="Ravel J."/>
        </authorList>
    </citation>
    <scope>NUCLEOTIDE SEQUENCE [LARGE SCALE GENOMIC DNA]</scope>
    <source>
        <strain>IP 31758</strain>
    </source>
</reference>